<feature type="chain" id="PRO_0000308366" description="Ras-like protein family member 11B">
    <location>
        <begin position="1"/>
        <end position="247"/>
    </location>
</feature>
<feature type="region of interest" description="Small GTPase-like">
    <location>
        <begin position="28"/>
        <end position="245"/>
    </location>
</feature>
<feature type="region of interest" description="Disordered" evidence="4">
    <location>
        <begin position="202"/>
        <end position="228"/>
    </location>
</feature>
<feature type="binding site" evidence="2">
    <location>
        <begin position="39"/>
        <end position="46"/>
    </location>
    <ligand>
        <name>GTP</name>
        <dbReference type="ChEBI" id="CHEBI:37565"/>
    </ligand>
</feature>
<feature type="binding site" evidence="2">
    <location>
        <begin position="86"/>
        <end position="93"/>
    </location>
    <ligand>
        <name>GTP</name>
        <dbReference type="ChEBI" id="CHEBI:37565"/>
    </ligand>
</feature>
<feature type="binding site" evidence="2">
    <location>
        <begin position="151"/>
        <end position="154"/>
    </location>
    <ligand>
        <name>GTP</name>
        <dbReference type="ChEBI" id="CHEBI:37565"/>
    </ligand>
</feature>
<feature type="splice variant" id="VSP_052585" description="In isoform 2." evidence="7">
    <location>
        <begin position="1"/>
        <end position="59"/>
    </location>
</feature>
<feature type="splice variant" id="VSP_052586" description="In isoform 2." evidence="7">
    <original>DYERNAGNLYTRQVHIEGETLAIQVQDTPGI</original>
    <variation>MKGSFELRDVLWPELSAVPTASCSPCSPSSP</variation>
    <location>
        <begin position="60"/>
        <end position="90"/>
    </location>
</feature>
<feature type="sequence conflict" description="In Ref. 1; BAB23353." evidence="8" ref="1">
    <original>P</original>
    <variation>L</variation>
    <location>
        <position position="224"/>
    </location>
</feature>
<sequence length="247" mass="27362">MRLIQNMCTIAEYPAPGSTAADCCLGAAGRRLVKIAVVGASGVGKTALVVRFLTKRFIGDYERNAGNLYTRQVHIEGETLAIQVQDTPGIQVHENGLSCSEQLNRCIRWADAVVLVFSITDHKSYELISQLHQHVQQLHPGTRLPVVLVANKADLLHVKQVDPQLGLQLASMLGCSFYEVSVSENYNDVYNAFHVLCKEVSPKQQPSSTPEKRRTSLIPRPKSPNMQDLKRRFKQALSAKVRTVTSV</sequence>
<dbReference type="EC" id="3.6.5.2" evidence="1"/>
<dbReference type="EMBL" id="AK004534">
    <property type="protein sequence ID" value="BAB23353.1"/>
    <property type="molecule type" value="mRNA"/>
</dbReference>
<dbReference type="EMBL" id="BC008101">
    <property type="protein sequence ID" value="AAH08101.1"/>
    <property type="molecule type" value="mRNA"/>
</dbReference>
<dbReference type="EMBL" id="BC083068">
    <property type="protein sequence ID" value="AAH83068.1"/>
    <property type="molecule type" value="mRNA"/>
</dbReference>
<dbReference type="EMBL" id="BK001707">
    <property type="protein sequence ID" value="DAA02249.1"/>
    <property type="molecule type" value="mRNA"/>
</dbReference>
<dbReference type="CCDS" id="CCDS39113.1">
    <molecule id="Q922H7-1"/>
</dbReference>
<dbReference type="RefSeq" id="NP_081154.1">
    <molecule id="Q922H7-1"/>
    <property type="nucleotide sequence ID" value="NM_026878.1"/>
</dbReference>
<dbReference type="SMR" id="Q922H7"/>
<dbReference type="FunCoup" id="Q922H7">
    <property type="interactions" value="244"/>
</dbReference>
<dbReference type="STRING" id="10090.ENSMUSP00000053389"/>
<dbReference type="iPTMnet" id="Q922H7"/>
<dbReference type="PhosphoSitePlus" id="Q922H7"/>
<dbReference type="PaxDb" id="10090-ENSMUSP00000053389"/>
<dbReference type="ProteomicsDB" id="261007">
    <molecule id="Q922H7-1"/>
</dbReference>
<dbReference type="ProteomicsDB" id="261008">
    <molecule id="Q922H7-2"/>
</dbReference>
<dbReference type="Antibodypedia" id="23900">
    <property type="antibodies" value="93 antibodies from 24 providers"/>
</dbReference>
<dbReference type="Ensembl" id="ENSMUST00000051937.9">
    <molecule id="Q922H7-1"/>
    <property type="protein sequence ID" value="ENSMUSP00000053389.7"/>
    <property type="gene ID" value="ENSMUSG00000049907.9"/>
</dbReference>
<dbReference type="GeneID" id="68939"/>
<dbReference type="KEGG" id="mmu:68939"/>
<dbReference type="UCSC" id="uc008xtj.1">
    <molecule id="Q922H7-1"/>
    <property type="organism name" value="mouse"/>
</dbReference>
<dbReference type="AGR" id="MGI:1916189"/>
<dbReference type="CTD" id="65997"/>
<dbReference type="MGI" id="MGI:1916189">
    <property type="gene designation" value="Rasl11b"/>
</dbReference>
<dbReference type="VEuPathDB" id="HostDB:ENSMUSG00000049907"/>
<dbReference type="eggNOG" id="KOG0395">
    <property type="taxonomic scope" value="Eukaryota"/>
</dbReference>
<dbReference type="GeneTree" id="ENSGT00940000158643"/>
<dbReference type="HOGENOM" id="CLU_041217_9_7_1"/>
<dbReference type="InParanoid" id="Q922H7"/>
<dbReference type="OMA" id="KEVEPQH"/>
<dbReference type="OrthoDB" id="18798at2759"/>
<dbReference type="PhylomeDB" id="Q922H7"/>
<dbReference type="TreeFam" id="TF318030"/>
<dbReference type="BioGRID-ORCS" id="68939">
    <property type="hits" value="3 hits in 77 CRISPR screens"/>
</dbReference>
<dbReference type="ChiTaRS" id="Rasl11b">
    <property type="organism name" value="mouse"/>
</dbReference>
<dbReference type="PRO" id="PR:Q922H7"/>
<dbReference type="Proteomes" id="UP000000589">
    <property type="component" value="Chromosome 5"/>
</dbReference>
<dbReference type="RNAct" id="Q922H7">
    <property type="molecule type" value="protein"/>
</dbReference>
<dbReference type="Bgee" id="ENSMUSG00000049907">
    <property type="expression patterns" value="Expressed in urinary bladder urothelium and 261 other cell types or tissues"/>
</dbReference>
<dbReference type="GO" id="GO:0003925">
    <property type="term" value="F:G protein activity"/>
    <property type="evidence" value="ECO:0007669"/>
    <property type="project" value="UniProtKB-EC"/>
</dbReference>
<dbReference type="GO" id="GO:0005525">
    <property type="term" value="F:GTP binding"/>
    <property type="evidence" value="ECO:0007669"/>
    <property type="project" value="UniProtKB-KW"/>
</dbReference>
<dbReference type="GO" id="GO:0005160">
    <property type="term" value="F:transforming growth factor beta receptor binding"/>
    <property type="evidence" value="ECO:0000353"/>
    <property type="project" value="MGI"/>
</dbReference>
<dbReference type="GO" id="GO:0030512">
    <property type="term" value="P:negative regulation of transforming growth factor beta receptor signaling pathway"/>
    <property type="evidence" value="ECO:0000314"/>
    <property type="project" value="MGI"/>
</dbReference>
<dbReference type="CDD" id="cd04146">
    <property type="entry name" value="RERG_RasL11_like"/>
    <property type="match status" value="1"/>
</dbReference>
<dbReference type="FunFam" id="3.40.50.300:FF:000718">
    <property type="entry name" value="Ras-like protein family member 11A"/>
    <property type="match status" value="1"/>
</dbReference>
<dbReference type="Gene3D" id="3.40.50.300">
    <property type="entry name" value="P-loop containing nucleotide triphosphate hydrolases"/>
    <property type="match status" value="1"/>
</dbReference>
<dbReference type="InterPro" id="IPR027417">
    <property type="entry name" value="P-loop_NTPase"/>
</dbReference>
<dbReference type="InterPro" id="IPR051065">
    <property type="entry name" value="Ras-related_GTPase"/>
</dbReference>
<dbReference type="InterPro" id="IPR005225">
    <property type="entry name" value="Small_GTP-bd"/>
</dbReference>
<dbReference type="InterPro" id="IPR001806">
    <property type="entry name" value="Small_GTPase"/>
</dbReference>
<dbReference type="NCBIfam" id="TIGR00231">
    <property type="entry name" value="small_GTP"/>
    <property type="match status" value="1"/>
</dbReference>
<dbReference type="PANTHER" id="PTHR45704">
    <property type="entry name" value="RAS-LIKE FAMILY MEMBER 11"/>
    <property type="match status" value="1"/>
</dbReference>
<dbReference type="Pfam" id="PF00071">
    <property type="entry name" value="Ras"/>
    <property type="match status" value="1"/>
</dbReference>
<dbReference type="PRINTS" id="PR00449">
    <property type="entry name" value="RASTRNSFRMNG"/>
</dbReference>
<dbReference type="SMART" id="SM00175">
    <property type="entry name" value="RAB"/>
    <property type="match status" value="1"/>
</dbReference>
<dbReference type="SMART" id="SM00173">
    <property type="entry name" value="RAS"/>
    <property type="match status" value="1"/>
</dbReference>
<dbReference type="SMART" id="SM00174">
    <property type="entry name" value="RHO"/>
    <property type="match status" value="1"/>
</dbReference>
<dbReference type="SUPFAM" id="SSF52540">
    <property type="entry name" value="P-loop containing nucleoside triphosphate hydrolases"/>
    <property type="match status" value="1"/>
</dbReference>
<dbReference type="PROSITE" id="PS51421">
    <property type="entry name" value="RAS"/>
    <property type="match status" value="1"/>
</dbReference>
<reference evidence="8 11" key="1">
    <citation type="journal article" date="2005" name="Science">
        <title>The transcriptional landscape of the mammalian genome.</title>
        <authorList>
            <person name="Carninci P."/>
            <person name="Kasukawa T."/>
            <person name="Katayama S."/>
            <person name="Gough J."/>
            <person name="Frith M.C."/>
            <person name="Maeda N."/>
            <person name="Oyama R."/>
            <person name="Ravasi T."/>
            <person name="Lenhard B."/>
            <person name="Wells C."/>
            <person name="Kodzius R."/>
            <person name="Shimokawa K."/>
            <person name="Bajic V.B."/>
            <person name="Brenner S.E."/>
            <person name="Batalov S."/>
            <person name="Forrest A.R."/>
            <person name="Zavolan M."/>
            <person name="Davis M.J."/>
            <person name="Wilming L.G."/>
            <person name="Aidinis V."/>
            <person name="Allen J.E."/>
            <person name="Ambesi-Impiombato A."/>
            <person name="Apweiler R."/>
            <person name="Aturaliya R.N."/>
            <person name="Bailey T.L."/>
            <person name="Bansal M."/>
            <person name="Baxter L."/>
            <person name="Beisel K.W."/>
            <person name="Bersano T."/>
            <person name="Bono H."/>
            <person name="Chalk A.M."/>
            <person name="Chiu K.P."/>
            <person name="Choudhary V."/>
            <person name="Christoffels A."/>
            <person name="Clutterbuck D.R."/>
            <person name="Crowe M.L."/>
            <person name="Dalla E."/>
            <person name="Dalrymple B.P."/>
            <person name="de Bono B."/>
            <person name="Della Gatta G."/>
            <person name="di Bernardo D."/>
            <person name="Down T."/>
            <person name="Engstrom P."/>
            <person name="Fagiolini M."/>
            <person name="Faulkner G."/>
            <person name="Fletcher C.F."/>
            <person name="Fukushima T."/>
            <person name="Furuno M."/>
            <person name="Futaki S."/>
            <person name="Gariboldi M."/>
            <person name="Georgii-Hemming P."/>
            <person name="Gingeras T.R."/>
            <person name="Gojobori T."/>
            <person name="Green R.E."/>
            <person name="Gustincich S."/>
            <person name="Harbers M."/>
            <person name="Hayashi Y."/>
            <person name="Hensch T.K."/>
            <person name="Hirokawa N."/>
            <person name="Hill D."/>
            <person name="Huminiecki L."/>
            <person name="Iacono M."/>
            <person name="Ikeo K."/>
            <person name="Iwama A."/>
            <person name="Ishikawa T."/>
            <person name="Jakt M."/>
            <person name="Kanapin A."/>
            <person name="Katoh M."/>
            <person name="Kawasawa Y."/>
            <person name="Kelso J."/>
            <person name="Kitamura H."/>
            <person name="Kitano H."/>
            <person name="Kollias G."/>
            <person name="Krishnan S.P."/>
            <person name="Kruger A."/>
            <person name="Kummerfeld S.K."/>
            <person name="Kurochkin I.V."/>
            <person name="Lareau L.F."/>
            <person name="Lazarevic D."/>
            <person name="Lipovich L."/>
            <person name="Liu J."/>
            <person name="Liuni S."/>
            <person name="McWilliam S."/>
            <person name="Madan Babu M."/>
            <person name="Madera M."/>
            <person name="Marchionni L."/>
            <person name="Matsuda H."/>
            <person name="Matsuzawa S."/>
            <person name="Miki H."/>
            <person name="Mignone F."/>
            <person name="Miyake S."/>
            <person name="Morris K."/>
            <person name="Mottagui-Tabar S."/>
            <person name="Mulder N."/>
            <person name="Nakano N."/>
            <person name="Nakauchi H."/>
            <person name="Ng P."/>
            <person name="Nilsson R."/>
            <person name="Nishiguchi S."/>
            <person name="Nishikawa S."/>
            <person name="Nori F."/>
            <person name="Ohara O."/>
            <person name="Okazaki Y."/>
            <person name="Orlando V."/>
            <person name="Pang K.C."/>
            <person name="Pavan W.J."/>
            <person name="Pavesi G."/>
            <person name="Pesole G."/>
            <person name="Petrovsky N."/>
            <person name="Piazza S."/>
            <person name="Reed J."/>
            <person name="Reid J.F."/>
            <person name="Ring B.Z."/>
            <person name="Ringwald M."/>
            <person name="Rost B."/>
            <person name="Ruan Y."/>
            <person name="Salzberg S.L."/>
            <person name="Sandelin A."/>
            <person name="Schneider C."/>
            <person name="Schoenbach C."/>
            <person name="Sekiguchi K."/>
            <person name="Semple C.A."/>
            <person name="Seno S."/>
            <person name="Sessa L."/>
            <person name="Sheng Y."/>
            <person name="Shibata Y."/>
            <person name="Shimada H."/>
            <person name="Shimada K."/>
            <person name="Silva D."/>
            <person name="Sinclair B."/>
            <person name="Sperling S."/>
            <person name="Stupka E."/>
            <person name="Sugiura K."/>
            <person name="Sultana R."/>
            <person name="Takenaka Y."/>
            <person name="Taki K."/>
            <person name="Tammoja K."/>
            <person name="Tan S.L."/>
            <person name="Tang S."/>
            <person name="Taylor M.S."/>
            <person name="Tegner J."/>
            <person name="Teichmann S.A."/>
            <person name="Ueda H.R."/>
            <person name="van Nimwegen E."/>
            <person name="Verardo R."/>
            <person name="Wei C.L."/>
            <person name="Yagi K."/>
            <person name="Yamanishi H."/>
            <person name="Zabarovsky E."/>
            <person name="Zhu S."/>
            <person name="Zimmer A."/>
            <person name="Hide W."/>
            <person name="Bult C."/>
            <person name="Grimmond S.M."/>
            <person name="Teasdale R.D."/>
            <person name="Liu E.T."/>
            <person name="Brusic V."/>
            <person name="Quackenbush J."/>
            <person name="Wahlestedt C."/>
            <person name="Mattick J.S."/>
            <person name="Hume D.A."/>
            <person name="Kai C."/>
            <person name="Sasaki D."/>
            <person name="Tomaru Y."/>
            <person name="Fukuda S."/>
            <person name="Kanamori-Katayama M."/>
            <person name="Suzuki M."/>
            <person name="Aoki J."/>
            <person name="Arakawa T."/>
            <person name="Iida J."/>
            <person name="Imamura K."/>
            <person name="Itoh M."/>
            <person name="Kato T."/>
            <person name="Kawaji H."/>
            <person name="Kawagashira N."/>
            <person name="Kawashima T."/>
            <person name="Kojima M."/>
            <person name="Kondo S."/>
            <person name="Konno H."/>
            <person name="Nakano K."/>
            <person name="Ninomiya N."/>
            <person name="Nishio T."/>
            <person name="Okada M."/>
            <person name="Plessy C."/>
            <person name="Shibata K."/>
            <person name="Shiraki T."/>
            <person name="Suzuki S."/>
            <person name="Tagami M."/>
            <person name="Waki K."/>
            <person name="Watahiki A."/>
            <person name="Okamura-Oho Y."/>
            <person name="Suzuki H."/>
            <person name="Kawai J."/>
            <person name="Hayashizaki Y."/>
        </authorList>
    </citation>
    <scope>NUCLEOTIDE SEQUENCE [LARGE SCALE MRNA] (ISOFORM 2)</scope>
    <source>
        <strain evidence="11">C57BL/6J</strain>
        <tissue evidence="11">Embryo</tissue>
    </source>
</reference>
<reference evidence="8 9" key="2">
    <citation type="journal article" date="2004" name="Genome Res.">
        <title>The status, quality, and expansion of the NIH full-length cDNA project: the Mammalian Gene Collection (MGC).</title>
        <authorList>
            <consortium name="The MGC Project Team"/>
        </authorList>
    </citation>
    <scope>NUCLEOTIDE SEQUENCE [LARGE SCALE MRNA] (ISOFORM 1)</scope>
    <source>
        <strain evidence="10">C57BL/6J</strain>
        <strain evidence="9">FVB/N</strain>
        <tissue evidence="9">Mammary tumor</tissue>
        <tissue evidence="10">Olfactory epithelium</tissue>
    </source>
</reference>
<reference evidence="8 12" key="3">
    <citation type="journal article" date="2004" name="Biochem. Biophys. Res. Commun.">
        <title>Rasl11a, member of a novel small monomeric GTPase gene family, is differentially expressed in prostate tumors.</title>
        <authorList>
            <person name="Louro R."/>
            <person name="Nakaya H.I."/>
            <person name="Paquola A.C.M."/>
            <person name="Martins E.A.L."/>
            <person name="da Silva A.M."/>
            <person name="Verjovski-Almeida S."/>
            <person name="Reis E.M."/>
        </authorList>
    </citation>
    <scope>IDENTIFICATION (ISOFORM 1)</scope>
</reference>
<protein>
    <recommendedName>
        <fullName>Ras-like protein family member 11B</fullName>
        <ecNumber evidence="1">3.6.5.2</ecNumber>
    </recommendedName>
</protein>
<name>RSLBB_MOUSE</name>
<proteinExistence type="evidence at transcript level"/>
<comment type="catalytic activity">
    <reaction evidence="1">
        <text>GTP + H2O = GDP + phosphate + H(+)</text>
        <dbReference type="Rhea" id="RHEA:19669"/>
        <dbReference type="ChEBI" id="CHEBI:15377"/>
        <dbReference type="ChEBI" id="CHEBI:15378"/>
        <dbReference type="ChEBI" id="CHEBI:37565"/>
        <dbReference type="ChEBI" id="CHEBI:43474"/>
        <dbReference type="ChEBI" id="CHEBI:58189"/>
        <dbReference type="EC" id="3.6.5.2"/>
    </reaction>
</comment>
<comment type="alternative products">
    <event type="alternative splicing"/>
    <isoform>
        <id>Q922H7-1</id>
        <name evidence="5">1</name>
        <sequence type="displayed"/>
    </isoform>
    <isoform>
        <id>Q922H7-2</id>
        <name evidence="6">2</name>
        <sequence type="described" ref="VSP_052585 VSP_052586"/>
    </isoform>
</comment>
<comment type="similarity">
    <text evidence="3">Belongs to the small GTPase superfamily. Ras family.</text>
</comment>
<organism>
    <name type="scientific">Mus musculus</name>
    <name type="common">Mouse</name>
    <dbReference type="NCBI Taxonomy" id="10090"/>
    <lineage>
        <taxon>Eukaryota</taxon>
        <taxon>Metazoa</taxon>
        <taxon>Chordata</taxon>
        <taxon>Craniata</taxon>
        <taxon>Vertebrata</taxon>
        <taxon>Euteleostomi</taxon>
        <taxon>Mammalia</taxon>
        <taxon>Eutheria</taxon>
        <taxon>Euarchontoglires</taxon>
        <taxon>Glires</taxon>
        <taxon>Rodentia</taxon>
        <taxon>Myomorpha</taxon>
        <taxon>Muroidea</taxon>
        <taxon>Muridae</taxon>
        <taxon>Murinae</taxon>
        <taxon>Mus</taxon>
        <taxon>Mus</taxon>
    </lineage>
</organism>
<gene>
    <name evidence="9 13" type="primary">Rasl11b</name>
</gene>
<keyword id="KW-0025">Alternative splicing</keyword>
<keyword id="KW-0342">GTP-binding</keyword>
<keyword id="KW-0378">Hydrolase</keyword>
<keyword id="KW-0547">Nucleotide-binding</keyword>
<keyword id="KW-1185">Reference proteome</keyword>
<evidence type="ECO:0000250" key="1">
    <source>
        <dbReference type="UniProtKB" id="P01116"/>
    </source>
</evidence>
<evidence type="ECO:0000250" key="2">
    <source>
        <dbReference type="UniProtKB" id="Q96A58"/>
    </source>
</evidence>
<evidence type="ECO:0000255" key="3"/>
<evidence type="ECO:0000256" key="4">
    <source>
        <dbReference type="SAM" id="MobiDB-lite"/>
    </source>
</evidence>
<evidence type="ECO:0000269" key="5">
    <source>
    </source>
</evidence>
<evidence type="ECO:0000269" key="6">
    <source>
    </source>
</evidence>
<evidence type="ECO:0000303" key="7">
    <source>
    </source>
</evidence>
<evidence type="ECO:0000305" key="8"/>
<evidence type="ECO:0000312" key="9">
    <source>
        <dbReference type="EMBL" id="AAH08101.1"/>
    </source>
</evidence>
<evidence type="ECO:0000312" key="10">
    <source>
        <dbReference type="EMBL" id="AAH83068.1"/>
    </source>
</evidence>
<evidence type="ECO:0000312" key="11">
    <source>
        <dbReference type="EMBL" id="BAB23353.1"/>
    </source>
</evidence>
<evidence type="ECO:0000312" key="12">
    <source>
        <dbReference type="EMBL" id="DAA02249.1"/>
    </source>
</evidence>
<evidence type="ECO:0000312" key="13">
    <source>
        <dbReference type="MGI" id="MGI:1916189"/>
    </source>
</evidence>
<accession>Q922H7</accession>
<accession>Q9D0S0</accession>